<feature type="chain" id="PRO_1000083416" description="Formimidoylglutamase">
    <location>
        <begin position="1"/>
        <end position="311"/>
    </location>
</feature>
<feature type="binding site" evidence="1">
    <location>
        <position position="130"/>
    </location>
    <ligand>
        <name>Mn(2+)</name>
        <dbReference type="ChEBI" id="CHEBI:29035"/>
        <label>1</label>
    </ligand>
</feature>
<feature type="binding site" evidence="1">
    <location>
        <position position="155"/>
    </location>
    <ligand>
        <name>Mn(2+)</name>
        <dbReference type="ChEBI" id="CHEBI:29035"/>
        <label>1</label>
    </ligand>
</feature>
<feature type="binding site" evidence="1">
    <location>
        <position position="155"/>
    </location>
    <ligand>
        <name>Mn(2+)</name>
        <dbReference type="ChEBI" id="CHEBI:29035"/>
        <label>2</label>
    </ligand>
</feature>
<feature type="binding site" evidence="1">
    <location>
        <position position="157"/>
    </location>
    <ligand>
        <name>Mn(2+)</name>
        <dbReference type="ChEBI" id="CHEBI:29035"/>
        <label>2</label>
    </ligand>
</feature>
<feature type="binding site" evidence="1">
    <location>
        <position position="159"/>
    </location>
    <ligand>
        <name>Mn(2+)</name>
        <dbReference type="ChEBI" id="CHEBI:29035"/>
        <label>1</label>
    </ligand>
</feature>
<feature type="binding site" evidence="1">
    <location>
        <position position="242"/>
    </location>
    <ligand>
        <name>Mn(2+)</name>
        <dbReference type="ChEBI" id="CHEBI:29035"/>
        <label>1</label>
    </ligand>
</feature>
<feature type="binding site" evidence="1">
    <location>
        <position position="242"/>
    </location>
    <ligand>
        <name>Mn(2+)</name>
        <dbReference type="ChEBI" id="CHEBI:29035"/>
        <label>2</label>
    </ligand>
</feature>
<feature type="binding site" evidence="1">
    <location>
        <position position="244"/>
    </location>
    <ligand>
        <name>Mn(2+)</name>
        <dbReference type="ChEBI" id="CHEBI:29035"/>
        <label>2</label>
    </ligand>
</feature>
<proteinExistence type="inferred from homology"/>
<reference key="1">
    <citation type="submission" date="2007-05" db="EMBL/GenBank/DDBJ databases">
        <title>Complete sequence of chromosome of Staphylococcus aureus subsp. aureus JH9.</title>
        <authorList>
            <consortium name="US DOE Joint Genome Institute"/>
            <person name="Copeland A."/>
            <person name="Lucas S."/>
            <person name="Lapidus A."/>
            <person name="Barry K."/>
            <person name="Detter J.C."/>
            <person name="Glavina del Rio T."/>
            <person name="Hammon N."/>
            <person name="Israni S."/>
            <person name="Pitluck S."/>
            <person name="Chain P."/>
            <person name="Malfatti S."/>
            <person name="Shin M."/>
            <person name="Vergez L."/>
            <person name="Schmutz J."/>
            <person name="Larimer F."/>
            <person name="Land M."/>
            <person name="Hauser L."/>
            <person name="Kyrpides N."/>
            <person name="Kim E."/>
            <person name="Tomasz A."/>
            <person name="Richardson P."/>
        </authorList>
    </citation>
    <scope>NUCLEOTIDE SEQUENCE [LARGE SCALE GENOMIC DNA]</scope>
    <source>
        <strain>JH9</strain>
    </source>
</reference>
<gene>
    <name evidence="1" type="primary">hutG</name>
    <name type="ordered locus">SaurJH9_2359</name>
</gene>
<accession>A5IVB6</accession>
<name>HUTG_STAA9</name>
<organism>
    <name type="scientific">Staphylococcus aureus (strain JH9)</name>
    <dbReference type="NCBI Taxonomy" id="359786"/>
    <lineage>
        <taxon>Bacteria</taxon>
        <taxon>Bacillati</taxon>
        <taxon>Bacillota</taxon>
        <taxon>Bacilli</taxon>
        <taxon>Bacillales</taxon>
        <taxon>Staphylococcaceae</taxon>
        <taxon>Staphylococcus</taxon>
    </lineage>
</organism>
<evidence type="ECO:0000255" key="1">
    <source>
        <dbReference type="HAMAP-Rule" id="MF_00737"/>
    </source>
</evidence>
<comment type="function">
    <text evidence="1">Catalyzes the conversion of N-formimidoyl-L-glutamate to L-glutamate and formamide.</text>
</comment>
<comment type="catalytic activity">
    <reaction evidence="1">
        <text>N-formimidoyl-L-glutamate + H2O = formamide + L-glutamate</text>
        <dbReference type="Rhea" id="RHEA:22492"/>
        <dbReference type="ChEBI" id="CHEBI:15377"/>
        <dbReference type="ChEBI" id="CHEBI:16397"/>
        <dbReference type="ChEBI" id="CHEBI:29985"/>
        <dbReference type="ChEBI" id="CHEBI:58928"/>
        <dbReference type="EC" id="3.5.3.8"/>
    </reaction>
</comment>
<comment type="cofactor">
    <cofactor evidence="1">
        <name>Mn(2+)</name>
        <dbReference type="ChEBI" id="CHEBI:29035"/>
    </cofactor>
    <text evidence="1">Binds 2 manganese ions per subunit.</text>
</comment>
<comment type="pathway">
    <text evidence="1">Amino-acid degradation; L-histidine degradation into L-glutamate; L-glutamate from N-formimidoyl-L-glutamate (hydrolase route): step 1/1.</text>
</comment>
<comment type="similarity">
    <text evidence="1">Belongs to the arginase family.</text>
</comment>
<protein>
    <recommendedName>
        <fullName evidence="1">Formimidoylglutamase</fullName>
        <ecNumber evidence="1">3.5.3.8</ecNumber>
    </recommendedName>
    <alternativeName>
        <fullName evidence="1">Formiminoglutamase</fullName>
    </alternativeName>
    <alternativeName>
        <fullName evidence="1">Formiminoglutamate hydrolase</fullName>
    </alternativeName>
</protein>
<keyword id="KW-0369">Histidine metabolism</keyword>
<keyword id="KW-0378">Hydrolase</keyword>
<keyword id="KW-0464">Manganese</keyword>
<keyword id="KW-0479">Metal-binding</keyword>
<sequence>MYKQGEPNLWTGRLDSETDPKKFRHFQTVTFEDLSKLEKSSMPSGVGILGYAVDKGVALNKGRIGAKEGPDAIKQAFAGLPDLNQCETLVDYGNVYHDHEELIDTQKEFAMLAAKSIANHRQTFLLGGGHDIAYAQYLATRKVYPTQSIGVINIDAHFDTRAEQQSTSGTSFRQILEEDENTDYLVLGIAQGGNTQSLFDYAKEKKIDYVFADELLSHVSPTIKDMIERFVHEHDVIMFTICMDVIDSAFAPGVSAPAVLGLYPHTVLELAKRIIPSDKVSSVSIAEMNPTYDADNRTAKLVANLVHHFLK</sequence>
<dbReference type="EC" id="3.5.3.8" evidence="1"/>
<dbReference type="EMBL" id="CP000703">
    <property type="protein sequence ID" value="ABQ50139.1"/>
    <property type="molecule type" value="Genomic_DNA"/>
</dbReference>
<dbReference type="RefSeq" id="WP_000277968.1">
    <property type="nucleotide sequence ID" value="NC_009487.1"/>
</dbReference>
<dbReference type="SMR" id="A5IVB6"/>
<dbReference type="KEGG" id="saj:SaurJH9_2359"/>
<dbReference type="HOGENOM" id="CLU_039478_2_0_9"/>
<dbReference type="UniPathway" id="UPA00379">
    <property type="reaction ID" value="UER00552"/>
</dbReference>
<dbReference type="GO" id="GO:0008783">
    <property type="term" value="F:agmatinase activity"/>
    <property type="evidence" value="ECO:0007669"/>
    <property type="project" value="TreeGrafter"/>
</dbReference>
<dbReference type="GO" id="GO:0050415">
    <property type="term" value="F:formimidoylglutamase activity"/>
    <property type="evidence" value="ECO:0007669"/>
    <property type="project" value="UniProtKB-UniRule"/>
</dbReference>
<dbReference type="GO" id="GO:0030145">
    <property type="term" value="F:manganese ion binding"/>
    <property type="evidence" value="ECO:0007669"/>
    <property type="project" value="UniProtKB-UniRule"/>
</dbReference>
<dbReference type="GO" id="GO:0019556">
    <property type="term" value="P:L-histidine catabolic process to glutamate and formamide"/>
    <property type="evidence" value="ECO:0007669"/>
    <property type="project" value="UniProtKB-UniPathway"/>
</dbReference>
<dbReference type="GO" id="GO:0019557">
    <property type="term" value="P:L-histidine catabolic process to glutamate and formate"/>
    <property type="evidence" value="ECO:0007669"/>
    <property type="project" value="UniProtKB-UniPathway"/>
</dbReference>
<dbReference type="GO" id="GO:0033389">
    <property type="term" value="P:putrescine biosynthetic process from arginine, via agmatine"/>
    <property type="evidence" value="ECO:0007669"/>
    <property type="project" value="TreeGrafter"/>
</dbReference>
<dbReference type="CDD" id="cd09988">
    <property type="entry name" value="Formimidoylglutamase"/>
    <property type="match status" value="1"/>
</dbReference>
<dbReference type="FunFam" id="3.40.800.10:FF:000015">
    <property type="entry name" value="Formimidoylglutamase"/>
    <property type="match status" value="1"/>
</dbReference>
<dbReference type="Gene3D" id="3.40.800.10">
    <property type="entry name" value="Ureohydrolase domain"/>
    <property type="match status" value="1"/>
</dbReference>
<dbReference type="HAMAP" id="MF_00737">
    <property type="entry name" value="Formimidoylglutam"/>
    <property type="match status" value="1"/>
</dbReference>
<dbReference type="InterPro" id="IPR005923">
    <property type="entry name" value="HutG"/>
</dbReference>
<dbReference type="InterPro" id="IPR006035">
    <property type="entry name" value="Ureohydrolase"/>
</dbReference>
<dbReference type="InterPro" id="IPR023696">
    <property type="entry name" value="Ureohydrolase_dom_sf"/>
</dbReference>
<dbReference type="NCBIfam" id="TIGR01227">
    <property type="entry name" value="hutG"/>
    <property type="match status" value="1"/>
</dbReference>
<dbReference type="PANTHER" id="PTHR11358">
    <property type="entry name" value="ARGINASE/AGMATINASE"/>
    <property type="match status" value="1"/>
</dbReference>
<dbReference type="PANTHER" id="PTHR11358:SF35">
    <property type="entry name" value="FORMIMIDOYLGLUTAMASE"/>
    <property type="match status" value="1"/>
</dbReference>
<dbReference type="Pfam" id="PF00491">
    <property type="entry name" value="Arginase"/>
    <property type="match status" value="1"/>
</dbReference>
<dbReference type="PIRSF" id="PIRSF036979">
    <property type="entry name" value="Arginase"/>
    <property type="match status" value="1"/>
</dbReference>
<dbReference type="SUPFAM" id="SSF52768">
    <property type="entry name" value="Arginase/deacetylase"/>
    <property type="match status" value="1"/>
</dbReference>
<dbReference type="PROSITE" id="PS51409">
    <property type="entry name" value="ARGINASE_2"/>
    <property type="match status" value="1"/>
</dbReference>